<evidence type="ECO:0000250" key="1"/>
<evidence type="ECO:0000256" key="2">
    <source>
        <dbReference type="SAM" id="MobiDB-lite"/>
    </source>
</evidence>
<evidence type="ECO:0000305" key="3"/>
<organism>
    <name type="scientific">Candida albicans (strain SC5314 / ATCC MYA-2876)</name>
    <name type="common">Yeast</name>
    <dbReference type="NCBI Taxonomy" id="237561"/>
    <lineage>
        <taxon>Eukaryota</taxon>
        <taxon>Fungi</taxon>
        <taxon>Dikarya</taxon>
        <taxon>Ascomycota</taxon>
        <taxon>Saccharomycotina</taxon>
        <taxon>Pichiomycetes</taxon>
        <taxon>Debaryomycetaceae</taxon>
        <taxon>Candida/Lodderomyces clade</taxon>
        <taxon>Candida</taxon>
    </lineage>
</organism>
<protein>
    <recommendedName>
        <fullName>Histone H2A.Z-specific chaperone CHZ1</fullName>
    </recommendedName>
</protein>
<keyword id="KW-0143">Chaperone</keyword>
<keyword id="KW-0539">Nucleus</keyword>
<keyword id="KW-1185">Reference proteome</keyword>
<comment type="function">
    <text evidence="1">Forms a chaperone-bound H2A.Z-H2B complex that acts as a source for SWR1 complex-dependent H2A to H2A.Z histone replacement in chromatin.</text>
</comment>
<comment type="subunit">
    <text evidence="1">Forms a heterotrimer with H2A.Z-H2B, stabilizing the association of the histone dimer. Also, with a lower affinity, forms a heterotrimer with H2A-H2B (By similarity).</text>
</comment>
<comment type="subcellular location">
    <subcellularLocation>
        <location evidence="1">Nucleus</location>
    </subcellularLocation>
</comment>
<comment type="similarity">
    <text evidence="3">Belongs to the CHZ1 family.</text>
</comment>
<name>CHZ1_CANAL</name>
<reference key="1">
    <citation type="journal article" date="2004" name="Proc. Natl. Acad. Sci. U.S.A.">
        <title>The diploid genome sequence of Candida albicans.</title>
        <authorList>
            <person name="Jones T."/>
            <person name="Federspiel N.A."/>
            <person name="Chibana H."/>
            <person name="Dungan J."/>
            <person name="Kalman S."/>
            <person name="Magee B.B."/>
            <person name="Newport G."/>
            <person name="Thorstenson Y.R."/>
            <person name="Agabian N."/>
            <person name="Magee P.T."/>
            <person name="Davis R.W."/>
            <person name="Scherer S."/>
        </authorList>
    </citation>
    <scope>NUCLEOTIDE SEQUENCE [LARGE SCALE GENOMIC DNA]</scope>
    <source>
        <strain>SC5314 / ATCC MYA-2876</strain>
    </source>
</reference>
<reference key="2">
    <citation type="journal article" date="2007" name="Genome Biol.">
        <title>Assembly of the Candida albicans genome into sixteen supercontigs aligned on the eight chromosomes.</title>
        <authorList>
            <person name="van het Hoog M."/>
            <person name="Rast T.J."/>
            <person name="Martchenko M."/>
            <person name="Grindle S."/>
            <person name="Dignard D."/>
            <person name="Hogues H."/>
            <person name="Cuomo C."/>
            <person name="Berriman M."/>
            <person name="Scherer S."/>
            <person name="Magee B.B."/>
            <person name="Whiteway M."/>
            <person name="Chibana H."/>
            <person name="Nantel A."/>
            <person name="Magee P.T."/>
        </authorList>
    </citation>
    <scope>GENOME REANNOTATION</scope>
    <source>
        <strain>SC5314 / ATCC MYA-2876</strain>
    </source>
</reference>
<reference key="3">
    <citation type="journal article" date="2013" name="Genome Biol.">
        <title>Assembly of a phased diploid Candida albicans genome facilitates allele-specific measurements and provides a simple model for repeat and indel structure.</title>
        <authorList>
            <person name="Muzzey D."/>
            <person name="Schwartz K."/>
            <person name="Weissman J.S."/>
            <person name="Sherlock G."/>
        </authorList>
    </citation>
    <scope>NUCLEOTIDE SEQUENCE [LARGE SCALE GENOMIC DNA]</scope>
    <scope>GENOME REANNOTATION</scope>
    <source>
        <strain>SC5314 / ATCC MYA-2876</strain>
    </source>
</reference>
<sequence>MSDESKPIEEPPIESKPQEEQDTEKESLTNSEESKKRAVEPSTDKKKKRRRRNYDEEDKELEKEEAKEKNAKTENNEEGDDDEDDEDDDYEQGKLEDEEEEEDELLEIDESNIITTGRRTRGKVIDFTKAAEELDKERGVVAEEDEEEEEEEEKENEDDDFKEQVQN</sequence>
<dbReference type="EMBL" id="CP017630">
    <property type="protein sequence ID" value="AOW31418.1"/>
    <property type="molecule type" value="Genomic_DNA"/>
</dbReference>
<dbReference type="RefSeq" id="XP_712353.2">
    <property type="nucleotide sequence ID" value="XM_707260.2"/>
</dbReference>
<dbReference type="SMR" id="Q59RN6"/>
<dbReference type="STRING" id="237561.Q59RN6"/>
<dbReference type="EnsemblFungi" id="CR_07230W_A-T">
    <property type="protein sequence ID" value="CR_07230W_A-T-p1"/>
    <property type="gene ID" value="CR_07230W_A"/>
</dbReference>
<dbReference type="GeneID" id="3646031"/>
<dbReference type="KEGG" id="cal:CAALFM_CR07230WA"/>
<dbReference type="CGD" id="CAL0000184636">
    <property type="gene designation" value="orf19.13566"/>
</dbReference>
<dbReference type="VEuPathDB" id="FungiDB:CR_07230W_A"/>
<dbReference type="eggNOG" id="ENOG502SCUM">
    <property type="taxonomic scope" value="Eukaryota"/>
</dbReference>
<dbReference type="HOGENOM" id="CLU_126134_1_0_1"/>
<dbReference type="InParanoid" id="Q59RN6"/>
<dbReference type="OrthoDB" id="4026566at2759"/>
<dbReference type="PRO" id="PR:Q59RN6"/>
<dbReference type="Proteomes" id="UP000000559">
    <property type="component" value="Chromosome R"/>
</dbReference>
<dbReference type="GO" id="GO:0005634">
    <property type="term" value="C:nucleus"/>
    <property type="evidence" value="ECO:0007669"/>
    <property type="project" value="UniProtKB-SubCell"/>
</dbReference>
<dbReference type="GO" id="GO:0042393">
    <property type="term" value="F:histone binding"/>
    <property type="evidence" value="ECO:0007669"/>
    <property type="project" value="EnsemblFungi"/>
</dbReference>
<dbReference type="GO" id="GO:0006338">
    <property type="term" value="P:chromatin remodeling"/>
    <property type="evidence" value="ECO:0007669"/>
    <property type="project" value="EnsemblFungi"/>
</dbReference>
<dbReference type="InterPro" id="IPR019098">
    <property type="entry name" value="Histone_chaperone_domain_CHZ"/>
</dbReference>
<dbReference type="Pfam" id="PF09649">
    <property type="entry name" value="CHZ"/>
    <property type="match status" value="1"/>
</dbReference>
<dbReference type="SMART" id="SM01082">
    <property type="entry name" value="CHZ"/>
    <property type="match status" value="1"/>
</dbReference>
<gene>
    <name type="primary">CHZ1</name>
    <name type="ordered locus">CAALFM_CR07230WA</name>
    <name type="ORF">CaO19.13566</name>
    <name type="ORF">CaO19.6147</name>
</gene>
<accession>Q59RN6</accession>
<accession>A0A1D8PTF5</accession>
<feature type="chain" id="PRO_0000330205" description="Histone H2A.Z-specific chaperone CHZ1">
    <location>
        <begin position="1"/>
        <end position="167"/>
    </location>
</feature>
<feature type="region of interest" description="Disordered" evidence="2">
    <location>
        <begin position="1"/>
        <end position="116"/>
    </location>
</feature>
<feature type="region of interest" description="Disordered" evidence="2">
    <location>
        <begin position="131"/>
        <end position="167"/>
    </location>
</feature>
<feature type="compositionally biased region" description="Basic and acidic residues" evidence="2">
    <location>
        <begin position="16"/>
        <end position="44"/>
    </location>
</feature>
<feature type="compositionally biased region" description="Basic and acidic residues" evidence="2">
    <location>
        <begin position="60"/>
        <end position="75"/>
    </location>
</feature>
<feature type="compositionally biased region" description="Acidic residues" evidence="2">
    <location>
        <begin position="76"/>
        <end position="110"/>
    </location>
</feature>
<feature type="compositionally biased region" description="Basic and acidic residues" evidence="2">
    <location>
        <begin position="131"/>
        <end position="141"/>
    </location>
</feature>
<feature type="compositionally biased region" description="Acidic residues" evidence="2">
    <location>
        <begin position="142"/>
        <end position="161"/>
    </location>
</feature>
<proteinExistence type="inferred from homology"/>